<protein>
    <recommendedName>
        <fullName>Uncharacterized ferredoxin MJ0199</fullName>
    </recommendedName>
</protein>
<dbReference type="EMBL" id="L77117">
    <property type="protein sequence ID" value="AAB98183.1"/>
    <property type="status" value="ALT_INIT"/>
    <property type="molecule type" value="Genomic_DNA"/>
</dbReference>
<dbReference type="PIR" id="H64324">
    <property type="entry name" value="H64324"/>
</dbReference>
<dbReference type="RefSeq" id="WP_064496418.1">
    <property type="nucleotide sequence ID" value="NC_000909.1"/>
</dbReference>
<dbReference type="SMR" id="Q57652"/>
<dbReference type="STRING" id="243232.MJ_0199"/>
<dbReference type="PaxDb" id="243232-MJ_0199"/>
<dbReference type="EnsemblBacteria" id="AAB98183">
    <property type="protein sequence ID" value="AAB98183"/>
    <property type="gene ID" value="MJ_0199"/>
</dbReference>
<dbReference type="GeneID" id="1451048"/>
<dbReference type="KEGG" id="mja:MJ_0199"/>
<dbReference type="eggNOG" id="arCOG00959">
    <property type="taxonomic scope" value="Archaea"/>
</dbReference>
<dbReference type="HOGENOM" id="CLU_139698_5_5_2"/>
<dbReference type="InParanoid" id="Q57652"/>
<dbReference type="OrthoDB" id="5583at2157"/>
<dbReference type="PhylomeDB" id="Q57652"/>
<dbReference type="Proteomes" id="UP000000805">
    <property type="component" value="Chromosome"/>
</dbReference>
<dbReference type="GO" id="GO:0051539">
    <property type="term" value="F:4 iron, 4 sulfur cluster binding"/>
    <property type="evidence" value="ECO:0007669"/>
    <property type="project" value="UniProtKB-KW"/>
</dbReference>
<dbReference type="GO" id="GO:0046872">
    <property type="term" value="F:metal ion binding"/>
    <property type="evidence" value="ECO:0007669"/>
    <property type="project" value="UniProtKB-KW"/>
</dbReference>
<dbReference type="GO" id="GO:0016491">
    <property type="term" value="F:oxidoreductase activity"/>
    <property type="evidence" value="ECO:0007669"/>
    <property type="project" value="UniProtKB-ARBA"/>
</dbReference>
<dbReference type="Gene3D" id="3.30.70.20">
    <property type="match status" value="1"/>
</dbReference>
<dbReference type="InterPro" id="IPR017896">
    <property type="entry name" value="4Fe4S_Fe-S-bd"/>
</dbReference>
<dbReference type="InterPro" id="IPR017900">
    <property type="entry name" value="4Fe4S_Fe_S_CS"/>
</dbReference>
<dbReference type="InterPro" id="IPR050572">
    <property type="entry name" value="Fe-S_Ferredoxin"/>
</dbReference>
<dbReference type="PANTHER" id="PTHR43687:SF5">
    <property type="entry name" value="4FE-4S FERREDOXIN-TYPE DOMAIN-CONTAINING PROTEIN"/>
    <property type="match status" value="1"/>
</dbReference>
<dbReference type="PANTHER" id="PTHR43687">
    <property type="entry name" value="ADENYLYLSULFATE REDUCTASE, BETA SUBUNIT"/>
    <property type="match status" value="1"/>
</dbReference>
<dbReference type="Pfam" id="PF12838">
    <property type="entry name" value="Fer4_7"/>
    <property type="match status" value="1"/>
</dbReference>
<dbReference type="SUPFAM" id="SSF54862">
    <property type="entry name" value="4Fe-4S ferredoxins"/>
    <property type="match status" value="1"/>
</dbReference>
<dbReference type="PROSITE" id="PS00198">
    <property type="entry name" value="4FE4S_FER_1"/>
    <property type="match status" value="1"/>
</dbReference>
<dbReference type="PROSITE" id="PS51379">
    <property type="entry name" value="4FE4S_FER_2"/>
    <property type="match status" value="2"/>
</dbReference>
<proteinExistence type="inferred from homology"/>
<evidence type="ECO:0000250" key="1"/>
<evidence type="ECO:0000255" key="2">
    <source>
        <dbReference type="PROSITE-ProRule" id="PRU00711"/>
    </source>
</evidence>
<evidence type="ECO:0000305" key="3"/>
<organism>
    <name type="scientific">Methanocaldococcus jannaschii (strain ATCC 43067 / DSM 2661 / JAL-1 / JCM 10045 / NBRC 100440)</name>
    <name type="common">Methanococcus jannaschii</name>
    <dbReference type="NCBI Taxonomy" id="243232"/>
    <lineage>
        <taxon>Archaea</taxon>
        <taxon>Methanobacteriati</taxon>
        <taxon>Methanobacteriota</taxon>
        <taxon>Methanomada group</taxon>
        <taxon>Methanococci</taxon>
        <taxon>Methanococcales</taxon>
        <taxon>Methanocaldococcaceae</taxon>
        <taxon>Methanocaldococcus</taxon>
    </lineage>
</organism>
<comment type="cofactor">
    <cofactor evidence="1">
        <name>[4Fe-4S] cluster</name>
        <dbReference type="ChEBI" id="CHEBI:49883"/>
    </cofactor>
    <text evidence="1">Binds 2 [4Fe-4S] clusters.</text>
</comment>
<comment type="sequence caution" evidence="3">
    <conflict type="erroneous initiation">
        <sequence resource="EMBL-CDS" id="AAB98183"/>
    </conflict>
</comment>
<name>FER4_METJA</name>
<feature type="chain" id="PRO_0000159132" description="Uncharacterized ferredoxin MJ0199">
    <location>
        <begin position="1"/>
        <end position="62"/>
    </location>
</feature>
<feature type="domain" description="4Fe-4S ferredoxin-type 1" evidence="2">
    <location>
        <begin position="2"/>
        <end position="31"/>
    </location>
</feature>
<feature type="domain" description="4Fe-4S ferredoxin-type 2" evidence="2">
    <location>
        <begin position="32"/>
        <end position="62"/>
    </location>
</feature>
<feature type="binding site" evidence="1">
    <location>
        <position position="10"/>
    </location>
    <ligand>
        <name>[4Fe-4S] cluster</name>
        <dbReference type="ChEBI" id="CHEBI:49883"/>
        <label>1</label>
    </ligand>
</feature>
<feature type="binding site" evidence="1">
    <location>
        <position position="15"/>
    </location>
    <ligand>
        <name>[4Fe-4S] cluster</name>
        <dbReference type="ChEBI" id="CHEBI:49883"/>
        <label>1</label>
    </ligand>
</feature>
<feature type="binding site" evidence="1">
    <location>
        <position position="18"/>
    </location>
    <ligand>
        <name>[4Fe-4S] cluster</name>
        <dbReference type="ChEBI" id="CHEBI:49883"/>
        <label>1</label>
    </ligand>
</feature>
<feature type="binding site" evidence="1">
    <location>
        <position position="22"/>
    </location>
    <ligand>
        <name>[4Fe-4S] cluster</name>
        <dbReference type="ChEBI" id="CHEBI:49883"/>
        <label>1</label>
    </ligand>
</feature>
<feature type="binding site" evidence="1">
    <location>
        <position position="42"/>
    </location>
    <ligand>
        <name>[4Fe-4S] cluster</name>
        <dbReference type="ChEBI" id="CHEBI:49883"/>
        <label>2</label>
    </ligand>
</feature>
<feature type="binding site" evidence="1">
    <location>
        <position position="45"/>
    </location>
    <ligand>
        <name>[4Fe-4S] cluster</name>
        <dbReference type="ChEBI" id="CHEBI:49883"/>
        <label>2</label>
    </ligand>
</feature>
<feature type="binding site" evidence="1">
    <location>
        <position position="48"/>
    </location>
    <ligand>
        <name>[4Fe-4S] cluster</name>
        <dbReference type="ChEBI" id="CHEBI:49883"/>
        <label>2</label>
    </ligand>
</feature>
<feature type="binding site" evidence="1">
    <location>
        <position position="52"/>
    </location>
    <ligand>
        <name>[4Fe-4S] cluster</name>
        <dbReference type="ChEBI" id="CHEBI:49883"/>
        <label>2</label>
    </ligand>
</feature>
<keyword id="KW-0004">4Fe-4S</keyword>
<keyword id="KW-0249">Electron transport</keyword>
<keyword id="KW-0408">Iron</keyword>
<keyword id="KW-0411">Iron-sulfur</keyword>
<keyword id="KW-0479">Metal-binding</keyword>
<keyword id="KW-1185">Reference proteome</keyword>
<keyword id="KW-0677">Repeat</keyword>
<keyword id="KW-0813">Transport</keyword>
<accession>Q57652</accession>
<reference key="1">
    <citation type="journal article" date="1996" name="Science">
        <title>Complete genome sequence of the methanogenic archaeon, Methanococcus jannaschii.</title>
        <authorList>
            <person name="Bult C.J."/>
            <person name="White O."/>
            <person name="Olsen G.J."/>
            <person name="Zhou L."/>
            <person name="Fleischmann R.D."/>
            <person name="Sutton G.G."/>
            <person name="Blake J.A."/>
            <person name="FitzGerald L.M."/>
            <person name="Clayton R.A."/>
            <person name="Gocayne J.D."/>
            <person name="Kerlavage A.R."/>
            <person name="Dougherty B.A."/>
            <person name="Tomb J.-F."/>
            <person name="Adams M.D."/>
            <person name="Reich C.I."/>
            <person name="Overbeek R."/>
            <person name="Kirkness E.F."/>
            <person name="Weinstock K.G."/>
            <person name="Merrick J.M."/>
            <person name="Glodek A."/>
            <person name="Scott J.L."/>
            <person name="Geoghagen N.S.M."/>
            <person name="Weidman J.F."/>
            <person name="Fuhrmann J.L."/>
            <person name="Nguyen D."/>
            <person name="Utterback T.R."/>
            <person name="Kelley J.M."/>
            <person name="Peterson J.D."/>
            <person name="Sadow P.W."/>
            <person name="Hanna M.C."/>
            <person name="Cotton M.D."/>
            <person name="Roberts K.M."/>
            <person name="Hurst M.A."/>
            <person name="Kaine B.P."/>
            <person name="Borodovsky M."/>
            <person name="Klenk H.-P."/>
            <person name="Fraser C.M."/>
            <person name="Smith H.O."/>
            <person name="Woese C.R."/>
            <person name="Venter J.C."/>
        </authorList>
    </citation>
    <scope>NUCLEOTIDE SEQUENCE [LARGE SCALE GENOMIC DNA]</scope>
    <source>
        <strain>ATCC 43067 / DSM 2661 / JAL-1 / JCM 10045 / NBRC 100440</strain>
    </source>
</reference>
<sequence>MAVTIDYSLCKGAECAECVNNCPMEVFEIEGDKVVVARPDDCTYCGVCEDVCPTGAVKVEPE</sequence>
<gene>
    <name type="ordered locus">MJ0199</name>
</gene>